<name>TSAD_RHOP5</name>
<keyword id="KW-0012">Acyltransferase</keyword>
<keyword id="KW-0963">Cytoplasm</keyword>
<keyword id="KW-0408">Iron</keyword>
<keyword id="KW-0479">Metal-binding</keyword>
<keyword id="KW-0808">Transferase</keyword>
<keyword id="KW-0819">tRNA processing</keyword>
<organism>
    <name type="scientific">Rhodopseudomonas palustris (strain BisA53)</name>
    <dbReference type="NCBI Taxonomy" id="316055"/>
    <lineage>
        <taxon>Bacteria</taxon>
        <taxon>Pseudomonadati</taxon>
        <taxon>Pseudomonadota</taxon>
        <taxon>Alphaproteobacteria</taxon>
        <taxon>Hyphomicrobiales</taxon>
        <taxon>Nitrobacteraceae</taxon>
        <taxon>Rhodopseudomonas</taxon>
    </lineage>
</organism>
<proteinExistence type="inferred from homology"/>
<evidence type="ECO:0000255" key="1">
    <source>
        <dbReference type="HAMAP-Rule" id="MF_01445"/>
    </source>
</evidence>
<evidence type="ECO:0000305" key="2"/>
<dbReference type="EC" id="2.3.1.234" evidence="1"/>
<dbReference type="EMBL" id="CP000463">
    <property type="protein sequence ID" value="ABJ04026.1"/>
    <property type="status" value="ALT_INIT"/>
    <property type="molecule type" value="Genomic_DNA"/>
</dbReference>
<dbReference type="SMR" id="Q07VK8"/>
<dbReference type="STRING" id="316055.RPE_0065"/>
<dbReference type="KEGG" id="rpe:RPE_0065"/>
<dbReference type="eggNOG" id="COG0533">
    <property type="taxonomic scope" value="Bacteria"/>
</dbReference>
<dbReference type="HOGENOM" id="CLU_023208_0_2_5"/>
<dbReference type="GO" id="GO:0005737">
    <property type="term" value="C:cytoplasm"/>
    <property type="evidence" value="ECO:0007669"/>
    <property type="project" value="UniProtKB-SubCell"/>
</dbReference>
<dbReference type="GO" id="GO:0005506">
    <property type="term" value="F:iron ion binding"/>
    <property type="evidence" value="ECO:0007669"/>
    <property type="project" value="UniProtKB-UniRule"/>
</dbReference>
<dbReference type="GO" id="GO:0061711">
    <property type="term" value="F:N(6)-L-threonylcarbamoyladenine synthase activity"/>
    <property type="evidence" value="ECO:0007669"/>
    <property type="project" value="UniProtKB-EC"/>
</dbReference>
<dbReference type="GO" id="GO:0002949">
    <property type="term" value="P:tRNA threonylcarbamoyladenosine modification"/>
    <property type="evidence" value="ECO:0007669"/>
    <property type="project" value="UniProtKB-UniRule"/>
</dbReference>
<dbReference type="CDD" id="cd24133">
    <property type="entry name" value="ASKHA_NBD_TsaD_bac"/>
    <property type="match status" value="1"/>
</dbReference>
<dbReference type="FunFam" id="3.30.420.40:FF:000012">
    <property type="entry name" value="tRNA N6-adenosine threonylcarbamoyltransferase"/>
    <property type="match status" value="1"/>
</dbReference>
<dbReference type="Gene3D" id="3.30.420.40">
    <property type="match status" value="2"/>
</dbReference>
<dbReference type="HAMAP" id="MF_01445">
    <property type="entry name" value="TsaD"/>
    <property type="match status" value="1"/>
</dbReference>
<dbReference type="InterPro" id="IPR043129">
    <property type="entry name" value="ATPase_NBD"/>
</dbReference>
<dbReference type="InterPro" id="IPR000905">
    <property type="entry name" value="Gcp-like_dom"/>
</dbReference>
<dbReference type="InterPro" id="IPR017861">
    <property type="entry name" value="KAE1/TsaD"/>
</dbReference>
<dbReference type="InterPro" id="IPR022450">
    <property type="entry name" value="TsaD"/>
</dbReference>
<dbReference type="NCBIfam" id="TIGR00329">
    <property type="entry name" value="gcp_kae1"/>
    <property type="match status" value="1"/>
</dbReference>
<dbReference type="NCBIfam" id="TIGR03723">
    <property type="entry name" value="T6A_TsaD_YgjD"/>
    <property type="match status" value="1"/>
</dbReference>
<dbReference type="PANTHER" id="PTHR11735">
    <property type="entry name" value="TRNA N6-ADENOSINE THREONYLCARBAMOYLTRANSFERASE"/>
    <property type="match status" value="1"/>
</dbReference>
<dbReference type="PANTHER" id="PTHR11735:SF6">
    <property type="entry name" value="TRNA N6-ADENOSINE THREONYLCARBAMOYLTRANSFERASE, MITOCHONDRIAL"/>
    <property type="match status" value="1"/>
</dbReference>
<dbReference type="Pfam" id="PF00814">
    <property type="entry name" value="TsaD"/>
    <property type="match status" value="1"/>
</dbReference>
<dbReference type="PRINTS" id="PR00789">
    <property type="entry name" value="OSIALOPTASE"/>
</dbReference>
<dbReference type="SUPFAM" id="SSF53067">
    <property type="entry name" value="Actin-like ATPase domain"/>
    <property type="match status" value="2"/>
</dbReference>
<gene>
    <name evidence="1" type="primary">tsaD</name>
    <name type="synonym">gcp</name>
    <name type="ordered locus">RPE_0065</name>
</gene>
<sequence length="363" mass="37716">MASDAASLVLGIETTCDETAAAVIERRADGSGQILSNIVHSQIEDHAPFGGVVPEIAARAHVDLLDGIIARAMREADVGFAQLSGVAAAAGPGLIGGVIVGLTTAKAIALVHETPLIAVNHLEAHALTPRLTHALEFPYCLFLASGGHTQIVAVLGVGDYVRLGTTVDDAMGEAFDKVAKMLGLPYPGGPQVERAAETGDADRFAFPRPMLGRAEPNFSLSGLKTAVRNEASRLMPLERQDIADLCAGFQAAVLDATADRLKVGLALFRDRFGPPHALVAAGGVAANQAIRRALHDVAVAAGTVLMMPPPKLCTDNGAMIAWAGAERLALGLTDPLDTAPRARWLLDANIATPAKFANTRAGF</sequence>
<comment type="function">
    <text evidence="1">Required for the formation of a threonylcarbamoyl group on adenosine at position 37 (t(6)A37) in tRNAs that read codons beginning with adenine. Is involved in the transfer of the threonylcarbamoyl moiety of threonylcarbamoyl-AMP (TC-AMP) to the N6 group of A37, together with TsaE and TsaB. TsaD likely plays a direct catalytic role in this reaction.</text>
</comment>
<comment type="catalytic activity">
    <reaction evidence="1">
        <text>L-threonylcarbamoyladenylate + adenosine(37) in tRNA = N(6)-L-threonylcarbamoyladenosine(37) in tRNA + AMP + H(+)</text>
        <dbReference type="Rhea" id="RHEA:37059"/>
        <dbReference type="Rhea" id="RHEA-COMP:10162"/>
        <dbReference type="Rhea" id="RHEA-COMP:10163"/>
        <dbReference type="ChEBI" id="CHEBI:15378"/>
        <dbReference type="ChEBI" id="CHEBI:73682"/>
        <dbReference type="ChEBI" id="CHEBI:74411"/>
        <dbReference type="ChEBI" id="CHEBI:74418"/>
        <dbReference type="ChEBI" id="CHEBI:456215"/>
        <dbReference type="EC" id="2.3.1.234"/>
    </reaction>
</comment>
<comment type="cofactor">
    <cofactor evidence="1">
        <name>Fe(2+)</name>
        <dbReference type="ChEBI" id="CHEBI:29033"/>
    </cofactor>
    <text evidence="1">Binds 1 Fe(2+) ion per subunit.</text>
</comment>
<comment type="subcellular location">
    <subcellularLocation>
        <location evidence="1">Cytoplasm</location>
    </subcellularLocation>
</comment>
<comment type="similarity">
    <text evidence="1">Belongs to the KAE1 / TsaD family.</text>
</comment>
<comment type="sequence caution" evidence="2">
    <conflict type="erroneous initiation">
        <sequence resource="EMBL-CDS" id="ABJ04026"/>
    </conflict>
</comment>
<accession>Q07VK8</accession>
<reference key="1">
    <citation type="submission" date="2006-09" db="EMBL/GenBank/DDBJ databases">
        <title>Complete sequence of Rhodopseudomonas palustris BisA53.</title>
        <authorList>
            <consortium name="US DOE Joint Genome Institute"/>
            <person name="Copeland A."/>
            <person name="Lucas S."/>
            <person name="Lapidus A."/>
            <person name="Barry K."/>
            <person name="Detter J.C."/>
            <person name="Glavina del Rio T."/>
            <person name="Hammon N."/>
            <person name="Israni S."/>
            <person name="Dalin E."/>
            <person name="Tice H."/>
            <person name="Pitluck S."/>
            <person name="Chain P."/>
            <person name="Malfatti S."/>
            <person name="Shin M."/>
            <person name="Vergez L."/>
            <person name="Schmutz J."/>
            <person name="Larimer F."/>
            <person name="Land M."/>
            <person name="Hauser L."/>
            <person name="Pelletier D.A."/>
            <person name="Kyrpides N."/>
            <person name="Kim E."/>
            <person name="Harwood C.S."/>
            <person name="Oda Y."/>
            <person name="Richardson P."/>
        </authorList>
    </citation>
    <scope>NUCLEOTIDE SEQUENCE [LARGE SCALE GENOMIC DNA]</scope>
    <source>
        <strain>BisA53</strain>
    </source>
</reference>
<protein>
    <recommendedName>
        <fullName evidence="1">tRNA N6-adenosine threonylcarbamoyltransferase</fullName>
        <ecNumber evidence="1">2.3.1.234</ecNumber>
    </recommendedName>
    <alternativeName>
        <fullName evidence="1">N6-L-threonylcarbamoyladenine synthase</fullName>
        <shortName evidence="1">t(6)A synthase</shortName>
    </alternativeName>
    <alternativeName>
        <fullName evidence="1">t(6)A37 threonylcarbamoyladenosine biosynthesis protein TsaD</fullName>
    </alternativeName>
    <alternativeName>
        <fullName evidence="1">tRNA threonylcarbamoyladenosine biosynthesis protein TsaD</fullName>
    </alternativeName>
</protein>
<feature type="chain" id="PRO_0000303517" description="tRNA N6-adenosine threonylcarbamoyltransferase">
    <location>
        <begin position="1"/>
        <end position="363"/>
    </location>
</feature>
<feature type="binding site" evidence="1">
    <location>
        <position position="121"/>
    </location>
    <ligand>
        <name>Fe cation</name>
        <dbReference type="ChEBI" id="CHEBI:24875"/>
    </ligand>
</feature>
<feature type="binding site" evidence="1">
    <location>
        <position position="125"/>
    </location>
    <ligand>
        <name>Fe cation</name>
        <dbReference type="ChEBI" id="CHEBI:24875"/>
    </ligand>
</feature>
<feature type="binding site" evidence="1">
    <location>
        <begin position="143"/>
        <end position="147"/>
    </location>
    <ligand>
        <name>substrate</name>
    </ligand>
</feature>
<feature type="binding site" evidence="1">
    <location>
        <position position="176"/>
    </location>
    <ligand>
        <name>substrate</name>
    </ligand>
</feature>
<feature type="binding site" evidence="1">
    <location>
        <position position="189"/>
    </location>
    <ligand>
        <name>substrate</name>
    </ligand>
</feature>
<feature type="binding site" evidence="1">
    <location>
        <position position="287"/>
    </location>
    <ligand>
        <name>substrate</name>
    </ligand>
</feature>
<feature type="binding site" evidence="1">
    <location>
        <position position="315"/>
    </location>
    <ligand>
        <name>Fe cation</name>
        <dbReference type="ChEBI" id="CHEBI:24875"/>
    </ligand>
</feature>